<evidence type="ECO:0000250" key="1">
    <source>
        <dbReference type="UniProtKB" id="Q7Z422"/>
    </source>
</evidence>
<evidence type="ECO:0000255" key="2">
    <source>
        <dbReference type="PROSITE-ProRule" id="PRU01009"/>
    </source>
</evidence>
<evidence type="ECO:0000255" key="3">
    <source>
        <dbReference type="PROSITE-ProRule" id="PRU01287"/>
    </source>
</evidence>
<evidence type="ECO:0000256" key="4">
    <source>
        <dbReference type="SAM" id="MobiDB-lite"/>
    </source>
</evidence>
<evidence type="ECO:0000303" key="5">
    <source>
    </source>
</evidence>
<evidence type="ECO:0000305" key="6"/>
<evidence type="ECO:0007744" key="7">
    <source>
    </source>
</evidence>
<evidence type="ECO:0007744" key="8">
    <source>
    </source>
</evidence>
<name>SZRD1_MOUSE</name>
<proteinExistence type="evidence at protein level"/>
<organism>
    <name type="scientific">Mus musculus</name>
    <name type="common">Mouse</name>
    <dbReference type="NCBI Taxonomy" id="10090"/>
    <lineage>
        <taxon>Eukaryota</taxon>
        <taxon>Metazoa</taxon>
        <taxon>Chordata</taxon>
        <taxon>Craniata</taxon>
        <taxon>Vertebrata</taxon>
        <taxon>Euteleostomi</taxon>
        <taxon>Mammalia</taxon>
        <taxon>Eutheria</taxon>
        <taxon>Euarchontoglires</taxon>
        <taxon>Glires</taxon>
        <taxon>Rodentia</taxon>
        <taxon>Myomorpha</taxon>
        <taxon>Muroidea</taxon>
        <taxon>Muridae</taxon>
        <taxon>Murinae</taxon>
        <taxon>Mus</taxon>
        <taxon>Mus</taxon>
    </lineage>
</organism>
<gene>
    <name type="primary">Szrd1</name>
    <name type="synonym">D4Ertd22e</name>
</gene>
<reference key="1">
    <citation type="journal article" date="2005" name="Science">
        <title>The transcriptional landscape of the mammalian genome.</title>
        <authorList>
            <person name="Carninci P."/>
            <person name="Kasukawa T."/>
            <person name="Katayama S."/>
            <person name="Gough J."/>
            <person name="Frith M.C."/>
            <person name="Maeda N."/>
            <person name="Oyama R."/>
            <person name="Ravasi T."/>
            <person name="Lenhard B."/>
            <person name="Wells C."/>
            <person name="Kodzius R."/>
            <person name="Shimokawa K."/>
            <person name="Bajic V.B."/>
            <person name="Brenner S.E."/>
            <person name="Batalov S."/>
            <person name="Forrest A.R."/>
            <person name="Zavolan M."/>
            <person name="Davis M.J."/>
            <person name="Wilming L.G."/>
            <person name="Aidinis V."/>
            <person name="Allen J.E."/>
            <person name="Ambesi-Impiombato A."/>
            <person name="Apweiler R."/>
            <person name="Aturaliya R.N."/>
            <person name="Bailey T.L."/>
            <person name="Bansal M."/>
            <person name="Baxter L."/>
            <person name="Beisel K.W."/>
            <person name="Bersano T."/>
            <person name="Bono H."/>
            <person name="Chalk A.M."/>
            <person name="Chiu K.P."/>
            <person name="Choudhary V."/>
            <person name="Christoffels A."/>
            <person name="Clutterbuck D.R."/>
            <person name="Crowe M.L."/>
            <person name="Dalla E."/>
            <person name="Dalrymple B.P."/>
            <person name="de Bono B."/>
            <person name="Della Gatta G."/>
            <person name="di Bernardo D."/>
            <person name="Down T."/>
            <person name="Engstrom P."/>
            <person name="Fagiolini M."/>
            <person name="Faulkner G."/>
            <person name="Fletcher C.F."/>
            <person name="Fukushima T."/>
            <person name="Furuno M."/>
            <person name="Futaki S."/>
            <person name="Gariboldi M."/>
            <person name="Georgii-Hemming P."/>
            <person name="Gingeras T.R."/>
            <person name="Gojobori T."/>
            <person name="Green R.E."/>
            <person name="Gustincich S."/>
            <person name="Harbers M."/>
            <person name="Hayashi Y."/>
            <person name="Hensch T.K."/>
            <person name="Hirokawa N."/>
            <person name="Hill D."/>
            <person name="Huminiecki L."/>
            <person name="Iacono M."/>
            <person name="Ikeo K."/>
            <person name="Iwama A."/>
            <person name="Ishikawa T."/>
            <person name="Jakt M."/>
            <person name="Kanapin A."/>
            <person name="Katoh M."/>
            <person name="Kawasawa Y."/>
            <person name="Kelso J."/>
            <person name="Kitamura H."/>
            <person name="Kitano H."/>
            <person name="Kollias G."/>
            <person name="Krishnan S.P."/>
            <person name="Kruger A."/>
            <person name="Kummerfeld S.K."/>
            <person name="Kurochkin I.V."/>
            <person name="Lareau L.F."/>
            <person name="Lazarevic D."/>
            <person name="Lipovich L."/>
            <person name="Liu J."/>
            <person name="Liuni S."/>
            <person name="McWilliam S."/>
            <person name="Madan Babu M."/>
            <person name="Madera M."/>
            <person name="Marchionni L."/>
            <person name="Matsuda H."/>
            <person name="Matsuzawa S."/>
            <person name="Miki H."/>
            <person name="Mignone F."/>
            <person name="Miyake S."/>
            <person name="Morris K."/>
            <person name="Mottagui-Tabar S."/>
            <person name="Mulder N."/>
            <person name="Nakano N."/>
            <person name="Nakauchi H."/>
            <person name="Ng P."/>
            <person name="Nilsson R."/>
            <person name="Nishiguchi S."/>
            <person name="Nishikawa S."/>
            <person name="Nori F."/>
            <person name="Ohara O."/>
            <person name="Okazaki Y."/>
            <person name="Orlando V."/>
            <person name="Pang K.C."/>
            <person name="Pavan W.J."/>
            <person name="Pavesi G."/>
            <person name="Pesole G."/>
            <person name="Petrovsky N."/>
            <person name="Piazza S."/>
            <person name="Reed J."/>
            <person name="Reid J.F."/>
            <person name="Ring B.Z."/>
            <person name="Ringwald M."/>
            <person name="Rost B."/>
            <person name="Ruan Y."/>
            <person name="Salzberg S.L."/>
            <person name="Sandelin A."/>
            <person name="Schneider C."/>
            <person name="Schoenbach C."/>
            <person name="Sekiguchi K."/>
            <person name="Semple C.A."/>
            <person name="Seno S."/>
            <person name="Sessa L."/>
            <person name="Sheng Y."/>
            <person name="Shibata Y."/>
            <person name="Shimada H."/>
            <person name="Shimada K."/>
            <person name="Silva D."/>
            <person name="Sinclair B."/>
            <person name="Sperling S."/>
            <person name="Stupka E."/>
            <person name="Sugiura K."/>
            <person name="Sultana R."/>
            <person name="Takenaka Y."/>
            <person name="Taki K."/>
            <person name="Tammoja K."/>
            <person name="Tan S.L."/>
            <person name="Tang S."/>
            <person name="Taylor M.S."/>
            <person name="Tegner J."/>
            <person name="Teichmann S.A."/>
            <person name="Ueda H.R."/>
            <person name="van Nimwegen E."/>
            <person name="Verardo R."/>
            <person name="Wei C.L."/>
            <person name="Yagi K."/>
            <person name="Yamanishi H."/>
            <person name="Zabarovsky E."/>
            <person name="Zhu S."/>
            <person name="Zimmer A."/>
            <person name="Hide W."/>
            <person name="Bult C."/>
            <person name="Grimmond S.M."/>
            <person name="Teasdale R.D."/>
            <person name="Liu E.T."/>
            <person name="Brusic V."/>
            <person name="Quackenbush J."/>
            <person name="Wahlestedt C."/>
            <person name="Mattick J.S."/>
            <person name="Hume D.A."/>
            <person name="Kai C."/>
            <person name="Sasaki D."/>
            <person name="Tomaru Y."/>
            <person name="Fukuda S."/>
            <person name="Kanamori-Katayama M."/>
            <person name="Suzuki M."/>
            <person name="Aoki J."/>
            <person name="Arakawa T."/>
            <person name="Iida J."/>
            <person name="Imamura K."/>
            <person name="Itoh M."/>
            <person name="Kato T."/>
            <person name="Kawaji H."/>
            <person name="Kawagashira N."/>
            <person name="Kawashima T."/>
            <person name="Kojima M."/>
            <person name="Kondo S."/>
            <person name="Konno H."/>
            <person name="Nakano K."/>
            <person name="Ninomiya N."/>
            <person name="Nishio T."/>
            <person name="Okada M."/>
            <person name="Plessy C."/>
            <person name="Shibata K."/>
            <person name="Shiraki T."/>
            <person name="Suzuki S."/>
            <person name="Tagami M."/>
            <person name="Waki K."/>
            <person name="Watahiki A."/>
            <person name="Okamura-Oho Y."/>
            <person name="Suzuki H."/>
            <person name="Kawai J."/>
            <person name="Hayashizaki Y."/>
        </authorList>
    </citation>
    <scope>NUCLEOTIDE SEQUENCE [LARGE SCALE MRNA] (ISOFORM 2)</scope>
    <source>
        <strain>C57BL/6J</strain>
        <strain>NOD</strain>
        <tissue>Dendritic cell</tissue>
        <tissue>Embryo</tissue>
        <tissue>Placenta</tissue>
        <tissue>Spleen</tissue>
    </source>
</reference>
<reference key="2">
    <citation type="journal article" date="2009" name="PLoS Biol.">
        <title>Lineage-specific biology revealed by a finished genome assembly of the mouse.</title>
        <authorList>
            <person name="Church D.M."/>
            <person name="Goodstadt L."/>
            <person name="Hillier L.W."/>
            <person name="Zody M.C."/>
            <person name="Goldstein S."/>
            <person name="She X."/>
            <person name="Bult C.J."/>
            <person name="Agarwala R."/>
            <person name="Cherry J.L."/>
            <person name="DiCuccio M."/>
            <person name="Hlavina W."/>
            <person name="Kapustin Y."/>
            <person name="Meric P."/>
            <person name="Maglott D."/>
            <person name="Birtle Z."/>
            <person name="Marques A.C."/>
            <person name="Graves T."/>
            <person name="Zhou S."/>
            <person name="Teague B."/>
            <person name="Potamousis K."/>
            <person name="Churas C."/>
            <person name="Place M."/>
            <person name="Herschleb J."/>
            <person name="Runnheim R."/>
            <person name="Forrest D."/>
            <person name="Amos-Landgraf J."/>
            <person name="Schwartz D.C."/>
            <person name="Cheng Z."/>
            <person name="Lindblad-Toh K."/>
            <person name="Eichler E.E."/>
            <person name="Ponting C.P."/>
        </authorList>
    </citation>
    <scope>NUCLEOTIDE SEQUENCE [LARGE SCALE GENOMIC DNA]</scope>
    <source>
        <strain>C57BL/6J</strain>
    </source>
</reference>
<reference key="3">
    <citation type="journal article" date="2004" name="Genome Res.">
        <title>The status, quality, and expansion of the NIH full-length cDNA project: the Mammalian Gene Collection (MGC).</title>
        <authorList>
            <consortium name="The MGC Project Team"/>
        </authorList>
    </citation>
    <scope>NUCLEOTIDE SEQUENCE [LARGE SCALE MRNA] (ISOFORM 1)</scope>
    <source>
        <strain>C57BL/6J</strain>
        <tissue>Brain</tissue>
    </source>
</reference>
<reference key="4">
    <citation type="journal article" date="2007" name="Proc. Natl. Acad. Sci. U.S.A.">
        <title>Large-scale phosphorylation analysis of mouse liver.</title>
        <authorList>
            <person name="Villen J."/>
            <person name="Beausoleil S.A."/>
            <person name="Gerber S.A."/>
            <person name="Gygi S.P."/>
        </authorList>
    </citation>
    <scope>IDENTIFICATION BY MASS SPECTROMETRY [LARGE SCALE ANALYSIS]</scope>
    <source>
        <tissue>Liver</tissue>
    </source>
</reference>
<reference key="5">
    <citation type="journal article" date="2009" name="Mol. Cell. Proteomics">
        <title>Large scale localization of protein phosphorylation by use of electron capture dissociation mass spectrometry.</title>
        <authorList>
            <person name="Sweet S.M."/>
            <person name="Bailey C.M."/>
            <person name="Cunningham D.L."/>
            <person name="Heath J.K."/>
            <person name="Cooper H.J."/>
        </authorList>
    </citation>
    <scope>PHOSPHORYLATION [LARGE SCALE ANALYSIS] AT SER-107</scope>
    <scope>IDENTIFICATION BY MASS SPECTROMETRY [LARGE SCALE ANALYSIS]</scope>
    <source>
        <tissue>Embryonic fibroblast</tissue>
    </source>
</reference>
<reference key="6">
    <citation type="journal article" date="2010" name="Cell">
        <title>A tissue-specific atlas of mouse protein phosphorylation and expression.</title>
        <authorList>
            <person name="Huttlin E.L."/>
            <person name="Jedrychowski M.P."/>
            <person name="Elias J.E."/>
            <person name="Goswami T."/>
            <person name="Rad R."/>
            <person name="Beausoleil S.A."/>
            <person name="Villen J."/>
            <person name="Haas W."/>
            <person name="Sowa M.E."/>
            <person name="Gygi S.P."/>
        </authorList>
    </citation>
    <scope>PHOSPHORYLATION [LARGE SCALE ANALYSIS] AT SER-37 AND SER-39</scope>
    <scope>IDENTIFICATION BY MASS SPECTROMETRY [LARGE SCALE ANALYSIS]</scope>
    <source>
        <tissue>Brain</tissue>
        <tissue>Brown adipose tissue</tissue>
        <tissue>Heart</tissue>
        <tissue>Kidney</tissue>
        <tissue>Liver</tissue>
        <tissue>Lung</tissue>
        <tissue>Pancreas</tissue>
        <tissue>Spleen</tissue>
        <tissue>Testis</tissue>
    </source>
</reference>
<comment type="alternative products">
    <event type="alternative splicing"/>
    <isoform>
        <id>Q6NXN1-1</id>
        <name>1</name>
        <sequence type="displayed"/>
    </isoform>
    <isoform>
        <id>Q6NXN1-2</id>
        <name>2</name>
        <sequence type="described" ref="VSP_027998"/>
    </isoform>
</comment>
<comment type="similarity">
    <text evidence="6">Belongs to the SZRD1 family.</text>
</comment>
<keyword id="KW-0007">Acetylation</keyword>
<keyword id="KW-0025">Alternative splicing</keyword>
<keyword id="KW-0597">Phosphoprotein</keyword>
<keyword id="KW-1185">Reference proteome</keyword>
<feature type="chain" id="PRO_0000303069" description="SUZ RNA-binding domain-containing">
    <location>
        <begin position="1"/>
        <end position="152"/>
    </location>
</feature>
<feature type="domain" description="SUZ" evidence="2">
    <location>
        <begin position="42"/>
        <end position="107"/>
    </location>
</feature>
<feature type="domain" description="SUZ-C" evidence="3">
    <location>
        <begin position="111"/>
        <end position="152"/>
    </location>
</feature>
<feature type="region of interest" description="Disordered" evidence="4">
    <location>
        <begin position="30"/>
        <end position="152"/>
    </location>
</feature>
<feature type="compositionally biased region" description="Polar residues" evidence="4">
    <location>
        <begin position="66"/>
        <end position="80"/>
    </location>
</feature>
<feature type="compositionally biased region" description="Basic and acidic residues" evidence="4">
    <location>
        <begin position="89"/>
        <end position="100"/>
    </location>
</feature>
<feature type="compositionally biased region" description="Basic and acidic residues" evidence="4">
    <location>
        <begin position="113"/>
        <end position="130"/>
    </location>
</feature>
<feature type="modified residue" description="N-acetylmethionine" evidence="1">
    <location>
        <position position="1"/>
    </location>
</feature>
<feature type="modified residue" description="Phosphoserine" evidence="8">
    <location>
        <position position="37"/>
    </location>
</feature>
<feature type="modified residue" description="Phosphoserine" evidence="8">
    <location>
        <position position="39"/>
    </location>
</feature>
<feature type="modified residue" description="Phosphoserine" evidence="1">
    <location>
        <position position="51"/>
    </location>
</feature>
<feature type="modified residue" description="Phosphoserine" evidence="1">
    <location>
        <position position="105"/>
    </location>
</feature>
<feature type="modified residue" description="Phosphoserine" evidence="7">
    <location>
        <position position="107"/>
    </location>
</feature>
<feature type="splice variant" id="VSP_027998" description="In isoform 2." evidence="5">
    <original>MEDEEVAESWEEAADSGEIDRRLEKKLKITQKES</original>
    <variation>MRRSLRAGRRRQTAG</variation>
    <location>
        <begin position="1"/>
        <end position="34"/>
    </location>
</feature>
<feature type="sequence conflict" description="In Ref. 1; BAE42442." evidence="6" ref="1">
    <original>S</original>
    <variation>P</variation>
    <location>
        <position position="124"/>
    </location>
</feature>
<protein>
    <recommendedName>
        <fullName>SUZ RNA-binding domain-containing</fullName>
        <shortName>SUZ domain-containing protein 1</shortName>
    </recommendedName>
</protein>
<accession>Q6NXN1</accession>
<accession>Q3TB72</accession>
<accession>Q8BT36</accession>
<dbReference type="EMBL" id="AK027934">
    <property type="protein sequence ID" value="BAC25672.1"/>
    <property type="molecule type" value="mRNA"/>
</dbReference>
<dbReference type="EMBL" id="AK145912">
    <property type="protein sequence ID" value="BAE26745.1"/>
    <property type="molecule type" value="mRNA"/>
</dbReference>
<dbReference type="EMBL" id="AK171420">
    <property type="protein sequence ID" value="BAE42442.1"/>
    <property type="molecule type" value="mRNA"/>
</dbReference>
<dbReference type="EMBL" id="AK171702">
    <property type="protein sequence ID" value="BAE42618.1"/>
    <property type="molecule type" value="mRNA"/>
</dbReference>
<dbReference type="EMBL" id="AL645625">
    <property type="status" value="NOT_ANNOTATED_CDS"/>
    <property type="molecule type" value="Genomic_DNA"/>
</dbReference>
<dbReference type="EMBL" id="BC066992">
    <property type="protein sequence ID" value="AAH66992.1"/>
    <property type="molecule type" value="mRNA"/>
</dbReference>
<dbReference type="CCDS" id="CCDS18864.1">
    <molecule id="Q6NXN1-1"/>
</dbReference>
<dbReference type="RefSeq" id="NP_001020779.1">
    <molecule id="Q6NXN1-1"/>
    <property type="nucleotide sequence ID" value="NM_001025608.3"/>
</dbReference>
<dbReference type="RefSeq" id="NP_001264124.1">
    <property type="nucleotide sequence ID" value="NM_001277195.1"/>
</dbReference>
<dbReference type="BioGRID" id="229443">
    <property type="interactions" value="1"/>
</dbReference>
<dbReference type="FunCoup" id="Q6NXN1">
    <property type="interactions" value="106"/>
</dbReference>
<dbReference type="STRING" id="10090.ENSMUSP00000099545"/>
<dbReference type="iPTMnet" id="Q6NXN1"/>
<dbReference type="PhosphoSitePlus" id="Q6NXN1"/>
<dbReference type="jPOST" id="Q6NXN1"/>
<dbReference type="PaxDb" id="10090-ENSMUSP00000099545"/>
<dbReference type="PeptideAtlas" id="Q6NXN1"/>
<dbReference type="ProteomicsDB" id="253452">
    <molecule id="Q6NXN1-1"/>
</dbReference>
<dbReference type="ProteomicsDB" id="253453">
    <molecule id="Q6NXN1-2"/>
</dbReference>
<dbReference type="Pumba" id="Q6NXN1"/>
<dbReference type="Antibodypedia" id="29172">
    <property type="antibodies" value="145 antibodies from 17 providers"/>
</dbReference>
<dbReference type="Ensembl" id="ENSMUST00000102487.4">
    <molecule id="Q6NXN1-1"/>
    <property type="protein sequence ID" value="ENSMUSP00000099545.4"/>
    <property type="gene ID" value="ENSMUSG00000040842.18"/>
</dbReference>
<dbReference type="GeneID" id="213491"/>
<dbReference type="KEGG" id="mmu:213491"/>
<dbReference type="UCSC" id="uc008vnw.2">
    <molecule id="Q6NXN1-1"/>
    <property type="organism name" value="mouse"/>
</dbReference>
<dbReference type="UCSC" id="uc008vnx.2">
    <molecule id="Q6NXN1-2"/>
    <property type="organism name" value="mouse"/>
</dbReference>
<dbReference type="AGR" id="MGI:1098672"/>
<dbReference type="CTD" id="26099"/>
<dbReference type="MGI" id="MGI:1098672">
    <property type="gene designation" value="Szrd1"/>
</dbReference>
<dbReference type="VEuPathDB" id="HostDB:ENSMUSG00000040842"/>
<dbReference type="eggNOG" id="ENOG502RZH5">
    <property type="taxonomic scope" value="Eukaryota"/>
</dbReference>
<dbReference type="GeneTree" id="ENSGT00390000005532"/>
<dbReference type="InParanoid" id="Q6NXN1"/>
<dbReference type="OMA" id="PACMSVQ"/>
<dbReference type="OrthoDB" id="5373615at2759"/>
<dbReference type="PhylomeDB" id="Q6NXN1"/>
<dbReference type="TreeFam" id="TF324643"/>
<dbReference type="BioGRID-ORCS" id="213491">
    <property type="hits" value="11 hits in 78 CRISPR screens"/>
</dbReference>
<dbReference type="ChiTaRS" id="Szrd1">
    <property type="organism name" value="mouse"/>
</dbReference>
<dbReference type="PRO" id="PR:Q6NXN1"/>
<dbReference type="Proteomes" id="UP000000589">
    <property type="component" value="Chromosome 4"/>
</dbReference>
<dbReference type="RNAct" id="Q6NXN1">
    <property type="molecule type" value="protein"/>
</dbReference>
<dbReference type="Bgee" id="ENSMUSG00000040842">
    <property type="expression patterns" value="Expressed in yolk sac and 227 other cell types or tissues"/>
</dbReference>
<dbReference type="ExpressionAtlas" id="Q6NXN1">
    <property type="expression patterns" value="baseline and differential"/>
</dbReference>
<dbReference type="InterPro" id="IPR024771">
    <property type="entry name" value="SUZ"/>
</dbReference>
<dbReference type="InterPro" id="IPR024642">
    <property type="entry name" value="SUZ-C"/>
</dbReference>
<dbReference type="InterPro" id="IPR039228">
    <property type="entry name" value="SZRD1"/>
</dbReference>
<dbReference type="PANTHER" id="PTHR31796">
    <property type="entry name" value="SUZ DOMAIN-CONTAINING PROTEIN 1"/>
    <property type="match status" value="1"/>
</dbReference>
<dbReference type="PANTHER" id="PTHR31796:SF2">
    <property type="entry name" value="SUZ DOMAIN-CONTAINING PROTEIN 1"/>
    <property type="match status" value="1"/>
</dbReference>
<dbReference type="Pfam" id="PF12752">
    <property type="entry name" value="SUZ"/>
    <property type="match status" value="1"/>
</dbReference>
<dbReference type="Pfam" id="PF12901">
    <property type="entry name" value="SUZ-C"/>
    <property type="match status" value="1"/>
</dbReference>
<dbReference type="PROSITE" id="PS51673">
    <property type="entry name" value="SUZ"/>
    <property type="match status" value="1"/>
</dbReference>
<dbReference type="PROSITE" id="PS51938">
    <property type="entry name" value="SUZ_C"/>
    <property type="match status" value="1"/>
</dbReference>
<sequence>MEDEEVAESWEEAADSGEIDRRLEKKLKITQKESRKSKSPPKVPIVIQDDSLPTGPPPQIRILKRPTSNGVVSSPNSTSRPALPVKSLAQREAEYAEARRRILGSASPEEEQEKPILDRPTRISQPEDSRQPSNVIRQPLGPDGSQGFKQRR</sequence>